<feature type="chain" id="PRO_0000220700" description="Polyunsaturated fatty acid lipoxygenase ALOX15B">
    <location>
        <begin position="1"/>
        <end position="676"/>
    </location>
</feature>
<feature type="domain" description="PLAT" evidence="1">
    <location>
        <begin position="2"/>
        <end position="124"/>
    </location>
</feature>
<feature type="domain" description="Lipoxygenase" evidence="2">
    <location>
        <begin position="125"/>
        <end position="676"/>
    </location>
</feature>
<feature type="binding site" evidence="16">
    <location>
        <position position="15"/>
    </location>
    <ligand>
        <name>Ca(2+)</name>
        <dbReference type="ChEBI" id="CHEBI:29108"/>
        <label>1</label>
    </ligand>
</feature>
<feature type="binding site" evidence="16">
    <location>
        <position position="17"/>
    </location>
    <ligand>
        <name>Ca(2+)</name>
        <dbReference type="ChEBI" id="CHEBI:29108"/>
        <label>1</label>
    </ligand>
</feature>
<feature type="binding site" evidence="16">
    <location>
        <position position="39"/>
    </location>
    <ligand>
        <name>Ca(2+)</name>
        <dbReference type="ChEBI" id="CHEBI:29108"/>
        <label>2</label>
    </ligand>
</feature>
<feature type="binding site" evidence="16">
    <location>
        <position position="40"/>
    </location>
    <ligand>
        <name>Ca(2+)</name>
        <dbReference type="ChEBI" id="CHEBI:29108"/>
        <label>2</label>
    </ligand>
</feature>
<feature type="binding site" evidence="16">
    <location>
        <position position="42"/>
    </location>
    <ligand>
        <name>Ca(2+)</name>
        <dbReference type="ChEBI" id="CHEBI:29108"/>
        <label>2</label>
    </ligand>
</feature>
<feature type="binding site" evidence="16">
    <location>
        <position position="44"/>
    </location>
    <ligand>
        <name>Ca(2+)</name>
        <dbReference type="ChEBI" id="CHEBI:29108"/>
        <label>2</label>
    </ligand>
</feature>
<feature type="binding site" evidence="16">
    <location>
        <position position="85"/>
    </location>
    <ligand>
        <name>Ca(2+)</name>
        <dbReference type="ChEBI" id="CHEBI:29108"/>
        <label>1</label>
    </ligand>
</feature>
<feature type="binding site" evidence="16">
    <location>
        <position position="86"/>
    </location>
    <ligand>
        <name>Ca(2+)</name>
        <dbReference type="ChEBI" id="CHEBI:29108"/>
        <label>1</label>
    </ligand>
</feature>
<feature type="binding site" evidence="2 16">
    <location>
        <position position="373"/>
    </location>
    <ligand>
        <name>Fe cation</name>
        <dbReference type="ChEBI" id="CHEBI:24875"/>
        <note>catalytic</note>
    </ligand>
</feature>
<feature type="binding site" evidence="2 16">
    <location>
        <position position="378"/>
    </location>
    <ligand>
        <name>Fe cation</name>
        <dbReference type="ChEBI" id="CHEBI:24875"/>
        <note>catalytic</note>
    </ligand>
</feature>
<feature type="binding site" evidence="2 16">
    <location>
        <position position="553"/>
    </location>
    <ligand>
        <name>Fe cation</name>
        <dbReference type="ChEBI" id="CHEBI:24875"/>
        <note>catalytic</note>
    </ligand>
</feature>
<feature type="binding site" evidence="2 16">
    <location>
        <position position="676"/>
    </location>
    <ligand>
        <name>Fe cation</name>
        <dbReference type="ChEBI" id="CHEBI:24875"/>
        <note>catalytic</note>
    </ligand>
</feature>
<feature type="splice variant" id="VSP_003142" description="In isoform B and isoform D." evidence="21">
    <location>
        <begin position="401"/>
        <end position="429"/>
    </location>
</feature>
<feature type="splice variant" id="VSP_003143" description="In isoform B." evidence="21">
    <location>
        <begin position="483"/>
        <end position="527"/>
    </location>
</feature>
<feature type="splice variant" id="VSP_003144" description="In isoform C." evidence="21">
    <original>FDSCAWMPNLPPSMQLPPPTSKGLATCEGFIATLPPVNATCDVILALWLLSKEPGDQ</original>
    <variation>VRKGQRPRWQAGGDPAPQPHSALSAFSLTPVLGCPTCHPACSCHHPPPKAWQHARAS</variation>
    <location>
        <begin position="561"/>
        <end position="617"/>
    </location>
</feature>
<feature type="splice variant" id="VSP_003145" description="In isoform C." evidence="21">
    <location>
        <begin position="618"/>
        <end position="676"/>
    </location>
</feature>
<feature type="sequence variant" id="VAR_083544" description="Loss of 15-lipoxygenase activity; dbSNP:rs140152561." evidence="15">
    <original>A</original>
    <variation>D</variation>
    <location>
        <position position="416"/>
    </location>
</feature>
<feature type="sequence variant" id="VAR_061334" description="Does not affect arachidonate 15-lipoxygenase activity; does not impact enzyme structure; dbSNP:rs9895916." evidence="6 15">
    <original>R</original>
    <variation>H</variation>
    <location>
        <position position="486"/>
    </location>
</feature>
<feature type="sequence variant" id="VAR_024524" description="Does not affect arachidonate 15-lipoxygenase activity; does not impact enzyme structure; dbSNP:rs4792147." evidence="5 6 9 15 20">
    <original>Q</original>
    <variation>R</variation>
    <location>
        <position position="656"/>
    </location>
</feature>
<feature type="sequence variant" id="VAR_024525" description="Does not affect arachidonate 15-lipoxygenase activity; destabilizes the enzyme structure; dbSNP:rs7225107." evidence="15">
    <original>I</original>
    <variation>V</variation>
    <location>
        <position position="676"/>
    </location>
</feature>
<feature type="mutagenesis site" description="Abolishes calcium-dependent association with membranes; when associated with A-44 and A-85." evidence="16">
    <original>D</original>
    <variation>A</variation>
    <location>
        <position position="39"/>
    </location>
</feature>
<feature type="mutagenesis site" description="Abolishes calcium-dependent association with membranes; when associated with A-39 and A-85." evidence="16">
    <original>E</original>
    <variation>A</variation>
    <location>
        <position position="44"/>
    </location>
</feature>
<feature type="mutagenesis site" description="Abolishes calcium-dependent association with membranes; when associated with A-39 and A-44." evidence="16">
    <original>D</original>
    <variation>A</variation>
    <location>
        <position position="85"/>
    </location>
</feature>
<feature type="mutagenesis site" description="No effect on the stereoselectivity of the oxygenation reaction. Completely changes the stereoselectivity of the oxygenation reaction to produce (8S)-HPETE instead of (15S)-HPETE; when associated with H-603." evidence="4">
    <original>D</original>
    <variation>Y</variation>
    <location>
        <position position="602"/>
    </location>
</feature>
<feature type="mutagenesis site" description="Changes the stereoselectivity of the oxygenation reaction. Completely changes the stereoselectivity of the oxygenation reaction to produce (8S)-HPETE instead of (15S)-HPETE; when associated with Y-602." evidence="4">
    <original>V</original>
    <variation>H</variation>
    <location>
        <position position="603"/>
    </location>
</feature>
<feature type="sequence conflict" description="In Ref. 1; AAB61706 and 2; CAC34521." evidence="23" ref="1 2">
    <original>V</original>
    <variation>L</variation>
    <location>
        <position position="271"/>
    </location>
</feature>
<feature type="sequence conflict" description="In Ref. 6; AAD37786." evidence="23" ref="6">
    <original>G</original>
    <variation>C</variation>
    <location>
        <position position="338"/>
    </location>
</feature>
<feature type="strand" evidence="33">
    <location>
        <begin position="2"/>
        <end position="10"/>
    </location>
</feature>
<feature type="strand" evidence="33">
    <location>
        <begin position="22"/>
        <end position="28"/>
    </location>
</feature>
<feature type="strand" evidence="33">
    <location>
        <begin position="50"/>
        <end position="59"/>
    </location>
</feature>
<feature type="strand" evidence="33">
    <location>
        <begin position="63"/>
        <end position="71"/>
    </location>
</feature>
<feature type="turn" evidence="32">
    <location>
        <begin position="77"/>
        <end position="79"/>
    </location>
</feature>
<feature type="strand" evidence="33">
    <location>
        <begin position="86"/>
        <end position="95"/>
    </location>
</feature>
<feature type="strand" evidence="33">
    <location>
        <begin position="97"/>
        <end position="99"/>
    </location>
</feature>
<feature type="strand" evidence="33">
    <location>
        <begin position="102"/>
        <end position="113"/>
    </location>
</feature>
<feature type="strand" evidence="33">
    <location>
        <begin position="115"/>
        <end position="119"/>
    </location>
</feature>
<feature type="turn" evidence="33">
    <location>
        <begin position="126"/>
        <end position="128"/>
    </location>
</feature>
<feature type="helix" evidence="33">
    <location>
        <begin position="132"/>
        <end position="148"/>
    </location>
</feature>
<feature type="strand" evidence="32">
    <location>
        <begin position="161"/>
        <end position="163"/>
    </location>
</feature>
<feature type="helix" evidence="33">
    <location>
        <begin position="167"/>
        <end position="169"/>
    </location>
</feature>
<feature type="turn" evidence="33">
    <location>
        <begin position="172"/>
        <end position="174"/>
    </location>
</feature>
<feature type="helix" evidence="33">
    <location>
        <begin position="178"/>
        <end position="198"/>
    </location>
</feature>
<feature type="turn" evidence="33">
    <location>
        <begin position="199"/>
        <end position="202"/>
    </location>
</feature>
<feature type="helix" evidence="33">
    <location>
        <begin position="212"/>
        <end position="215"/>
    </location>
</feature>
<feature type="helix" evidence="33">
    <location>
        <begin position="216"/>
        <end position="219"/>
    </location>
</feature>
<feature type="helix" evidence="33">
    <location>
        <begin position="223"/>
        <end position="230"/>
    </location>
</feature>
<feature type="turn" evidence="33">
    <location>
        <begin position="231"/>
        <end position="233"/>
    </location>
</feature>
<feature type="helix" evidence="33">
    <location>
        <begin position="235"/>
        <end position="244"/>
    </location>
</feature>
<feature type="helix" evidence="33">
    <location>
        <begin position="265"/>
        <end position="272"/>
    </location>
</feature>
<feature type="helix" evidence="33">
    <location>
        <begin position="278"/>
        <end position="283"/>
    </location>
</feature>
<feature type="strand" evidence="33">
    <location>
        <begin position="287"/>
        <end position="291"/>
    </location>
</feature>
<feature type="helix" evidence="33">
    <location>
        <begin position="293"/>
        <end position="295"/>
    </location>
</feature>
<feature type="strand" evidence="33">
    <location>
        <begin position="314"/>
        <end position="319"/>
    </location>
</feature>
<feature type="turn" evidence="33">
    <location>
        <begin position="321"/>
        <end position="323"/>
    </location>
</feature>
<feature type="strand" evidence="33">
    <location>
        <begin position="326"/>
        <end position="332"/>
    </location>
</feature>
<feature type="strand" evidence="33">
    <location>
        <begin position="334"/>
        <end position="336"/>
    </location>
</feature>
<feature type="helix" evidence="33">
    <location>
        <begin position="350"/>
        <end position="370"/>
    </location>
</feature>
<feature type="helix" evidence="33">
    <location>
        <begin position="371"/>
        <end position="378"/>
    </location>
</feature>
<feature type="helix" evidence="33">
    <location>
        <begin position="379"/>
        <end position="391"/>
    </location>
</feature>
<feature type="helix" evidence="33">
    <location>
        <begin position="397"/>
        <end position="402"/>
    </location>
</feature>
<feature type="helix" evidence="33">
    <location>
        <begin position="403"/>
        <end position="406"/>
    </location>
</feature>
<feature type="helix" evidence="33">
    <location>
        <begin position="409"/>
        <end position="419"/>
    </location>
</feature>
<feature type="helix" evidence="33">
    <location>
        <begin position="426"/>
        <end position="430"/>
    </location>
</feature>
<feature type="helix" evidence="33">
    <location>
        <begin position="434"/>
        <end position="448"/>
    </location>
</feature>
<feature type="helix" evidence="33">
    <location>
        <begin position="451"/>
        <end position="453"/>
    </location>
</feature>
<feature type="helix" evidence="33">
    <location>
        <begin position="456"/>
        <end position="462"/>
    </location>
</feature>
<feature type="helix" evidence="33">
    <location>
        <begin position="472"/>
        <end position="495"/>
    </location>
</feature>
<feature type="helix" evidence="33">
    <location>
        <begin position="499"/>
        <end position="504"/>
    </location>
</feature>
<feature type="helix" evidence="33">
    <location>
        <begin position="506"/>
        <end position="518"/>
    </location>
</feature>
<feature type="turn" evidence="33">
    <location>
        <begin position="519"/>
        <end position="522"/>
    </location>
</feature>
<feature type="helix" evidence="33">
    <location>
        <begin position="524"/>
        <end position="526"/>
    </location>
</feature>
<feature type="helix" evidence="33">
    <location>
        <begin position="535"/>
        <end position="549"/>
    </location>
</feature>
<feature type="helix" evidence="33">
    <location>
        <begin position="551"/>
        <end position="557"/>
    </location>
</feature>
<feature type="helix" evidence="33">
    <location>
        <begin position="560"/>
        <end position="564"/>
    </location>
</feature>
<feature type="turn" evidence="33">
    <location>
        <begin position="567"/>
        <end position="569"/>
    </location>
</feature>
<feature type="strand" evidence="33">
    <location>
        <begin position="574"/>
        <end position="576"/>
    </location>
</feature>
<feature type="strand" evidence="32">
    <location>
        <begin position="580"/>
        <end position="583"/>
    </location>
</feature>
<feature type="helix" evidence="33">
    <location>
        <begin position="587"/>
        <end position="593"/>
    </location>
</feature>
<feature type="helix" evidence="33">
    <location>
        <begin position="597"/>
        <end position="610"/>
    </location>
</feature>
<feature type="helix" evidence="33">
    <location>
        <begin position="631"/>
        <end position="655"/>
    </location>
</feature>
<feature type="helix" evidence="33">
    <location>
        <begin position="667"/>
        <end position="669"/>
    </location>
</feature>
<feature type="strand" evidence="33">
    <location>
        <begin position="670"/>
        <end position="673"/>
    </location>
</feature>
<accession>O15296</accession>
<accession>D3DTR2</accession>
<accession>Q8IYQ2</accession>
<accession>Q8TEV3</accession>
<accession>Q8TEV4</accession>
<accession>Q8TEV5</accession>
<accession>Q8TEV6</accession>
<accession>Q9UKM4</accession>
<sequence>MAEFRVRVSTGEAFGAGTWDKVSVSIVGTRGESPPLPLDNLGKEFTAGAEEDFQVTLPEDVGRVLLLRVHKAPPVLPLLGPLAPDAWFCRWFQLTPPRGGHLLFPCYQWLEGAGTLVLQEGTAKVSWADHHPVLQQQRQEELQARQEMYQWKAYNPGWPHCLDEKTVEDLELNIKYSTAKNANFYLQAGSAFAEMKIKGLLDRKGLWRSLNEMKRIFNFRRTPAAEHAFEHWQEDAFFASQFLNGLNPVLIRRCHYLPKNFPVTDAMVASVLGPGTSLQAELEKGSLFLVDHGILSGIQTNVINGKPQFSAAPMTLLYQSPGCGPLLPLAIQLSQTPGPNSPIFLPTDDKWDWLLAKTWVRNAEFSFHEALTHLLHSHLLPEVFTLATLRQLPHCHPLFKLLIPHTRYTLHINTLARELLIVPGQVVDRSTGIGIEGFSELIQRNMKQLNYSLLCLPEDIRTRGVEDIPGYYYRDDGMQIWGAVERFVSEIIGIYYPSDESVQDDRELQAWVREIFSKGFLNQESSGIPSSLETREALVQYVTMVIFTCSAKHAAVSAGQFDSCAWMPNLPPSMQLPPPTSKGLATCEGFIATLPPVNATCDVILALWLLSKEPGDQRPLGTYPDEHFTEEAPRRSIATFQSRLAQISRGIQERNQGLVLPYTYLDPPLIENSVSI</sequence>
<comment type="function">
    <molecule>Isoform A</molecule>
    <text evidence="3 4 6 7 8 10 11 12 14 15 16 17 18 19 20 24 25 28 29">Non-heme iron-containing dioxygenase that catalyzes the stereo-specific peroxidation of free and esterified polyunsaturated fatty acids (PUFAs) generating a spectrum of bioactive lipid mediators (Probable) (PubMed:10542053, PubMed:10625675, PubMed:12704195, PubMed:17493578, PubMed:18311922, PubMed:24282679, PubMed:24497644, PubMed:32404334, PubMed:9177185). It inserts peroxyl groups at C15 of arachidonate ((5Z,8Z,11Z,14Z)-eicosatetraenoate) producing (15S)-hydroperoxyeicosatetraenoate/(15S)-HPETE (Probable) (PubMed:10625675, PubMed:11956198, PubMed:12704195, PubMed:17493578, PubMed:24282679, PubMed:24497644, PubMed:9177185). Also peroxidizes linoleate ((9Z,12Z)-octadecadienoate) to 13-hydroperoxyoctadecadienoate/13-HPODE (Probable) (PubMed:10542053, PubMed:27435673). Oxygenates arachidonyl derivatives such as 2-arachidonoylglycerol (2-AG) leading to the production and extracellular release of 15-hydroxyeicosatetraenoyl glycerol (15-HETE-G) that acts as a peroxisome proliferator-activated receptor alpha agonist (PubMed:11956198, PubMed:17493578, PubMed:18311922). Has the ability to efficiently class-switch ALOX5 pro-inflammatory mediators into anti-inflammatory intermediates (PubMed:27145229). Participates in the sequential oxidations of DHA ((4Z,7Z,10Z,13Z,16Z,19Z)-docosahexaenoate) to generate specialized pro-resolving mediators (SPMs) resolvin D5 ((7S,17S)-diHPDHA), which can actively down-regulate the immune response and have anti-aggregation properties with platelets (PubMed:32404334). In addition to free PUFAs hydrolyzed from phospholipids, it directly oxidizes PUFAs esterified to membrane-bound phospholipids (PubMed:27435673). Has no detectable 8S-lipoxygenase activity on arachidonate but reacts with (8S)-HPETE to produce (8S,15S)-diHPETE (Probable). May regulate progression through the cell cycle and cell proliferation (PubMed:11839751, PubMed:12704195). May also regulate cytokine secretion by macrophages and therefore play a role in the immune response (PubMed:18067895). May also regulate macrophage differentiation into proatherogenic foam cells (PubMed:22912809).</text>
</comment>
<comment type="function">
    <molecule>Isoform B</molecule>
    <text evidence="8">Does not convert arachidonic acid to 15S-hydroperoxyeicosatetraenoic acid/(15S)-HPETE.</text>
</comment>
<comment type="catalytic activity">
    <reaction evidence="4 7 8 10 15 16 20 24 28 29">
        <text>(5Z,8Z,11Z,14Z)-eicosatetraenoate + O2 = (15S)-hydroperoxy-(5Z,8Z,11Z,13E)-eicosatetraenoate</text>
        <dbReference type="Rhea" id="RHEA:16869"/>
        <dbReference type="ChEBI" id="CHEBI:15379"/>
        <dbReference type="ChEBI" id="CHEBI:32395"/>
        <dbReference type="ChEBI" id="CHEBI:57446"/>
        <dbReference type="EC" id="1.13.11.33"/>
    </reaction>
    <physiologicalReaction direction="left-to-right" evidence="8">
        <dbReference type="Rhea" id="RHEA:16870"/>
    </physiologicalReaction>
</comment>
<comment type="catalytic activity">
    <reaction evidence="18 24">
        <text>(9Z,12Z)-octadecadienoate + O2 = 13-hydroperoxy-(9Z,11E)-octadecadienoate</text>
        <dbReference type="Rhea" id="RHEA:48848"/>
        <dbReference type="ChEBI" id="CHEBI:15379"/>
        <dbReference type="ChEBI" id="CHEBI:30245"/>
        <dbReference type="ChEBI" id="CHEBI:90823"/>
    </reaction>
    <physiologicalReaction direction="left-to-right" evidence="18">
        <dbReference type="Rhea" id="RHEA:48849"/>
    </physiologicalReaction>
</comment>
<comment type="catalytic activity">
    <reaction evidence="17">
        <text>(5S)-hydroxy-(6E,8Z,11Z,14Z)-eicosatetraenoate + O2 = (5S)-hydroxy-(15S)-hydroperoxy-(6E,8Z,11Z,13E)-eicosatetraenoate</text>
        <dbReference type="Rhea" id="RHEA:53660"/>
        <dbReference type="ChEBI" id="CHEBI:15379"/>
        <dbReference type="ChEBI" id="CHEBI:90632"/>
        <dbReference type="ChEBI" id="CHEBI:137546"/>
    </reaction>
    <physiologicalReaction direction="left-to-right" evidence="28">
        <dbReference type="Rhea" id="RHEA:53661"/>
    </physiologicalReaction>
</comment>
<comment type="catalytic activity">
    <molecule>Isoform D</molecule>
    <reaction evidence="3">
        <text>(5Z,8Z,11Z,14Z)-eicosatetraenoate + O2 = 5-hydroperoxy-(6E,8Z,11Z,14Z)-eicosatetraenoate</text>
        <dbReference type="Rhea" id="RHEA:48844"/>
        <dbReference type="ChEBI" id="CHEBI:15379"/>
        <dbReference type="ChEBI" id="CHEBI:32395"/>
        <dbReference type="ChEBI" id="CHEBI:90822"/>
    </reaction>
    <physiologicalReaction direction="left-to-right" evidence="24">
        <dbReference type="Rhea" id="RHEA:48845"/>
    </physiologicalReaction>
</comment>
<comment type="catalytic activity">
    <reaction evidence="17">
        <text>(5S,6R)-dihydroxy-(7E,9E,11Z,14Z)-eicosatetraenoate + O2 = (5S,6R)-dihydroxy-(15S)-hydroperoxy-(7E,9E,11Z,13E)-eicosatetraenoate</text>
        <dbReference type="Rhea" id="RHEA:53656"/>
        <dbReference type="ChEBI" id="CHEBI:15379"/>
        <dbReference type="ChEBI" id="CHEBI:137542"/>
        <dbReference type="ChEBI" id="CHEBI:137547"/>
    </reaction>
    <physiologicalReaction direction="left-to-right" evidence="28">
        <dbReference type="Rhea" id="RHEA:53657"/>
    </physiologicalReaction>
</comment>
<comment type="catalytic activity">
    <reaction evidence="17">
        <text>(5S)-hydroperoxy-(6E,8Z,11Z,14Z)-eicosatetraenoate + O2 = (5S,15S)-dihydroperoxy-(6E,8Z,11Z,13E)-eicosatetraenoate</text>
        <dbReference type="Rhea" id="RHEA:53652"/>
        <dbReference type="ChEBI" id="CHEBI:15379"/>
        <dbReference type="ChEBI" id="CHEBI:57450"/>
        <dbReference type="ChEBI" id="CHEBI:137543"/>
    </reaction>
    <physiologicalReaction direction="left-to-right" evidence="28">
        <dbReference type="Rhea" id="RHEA:53653"/>
    </physiologicalReaction>
</comment>
<comment type="catalytic activity">
    <reaction evidence="7">
        <text>2-(5Z,8Z,11Z,14Z-eicosatetraenoyl)-glycerol + O2 = 2-[15(S)-hydroperoxy-(5Z,8Z,11Z,13E)-eicosatetraenoyl]-glycerol</text>
        <dbReference type="Rhea" id="RHEA:53332"/>
        <dbReference type="ChEBI" id="CHEBI:15379"/>
        <dbReference type="ChEBI" id="CHEBI:52392"/>
        <dbReference type="ChEBI" id="CHEBI:137187"/>
    </reaction>
    <physiologicalReaction direction="left-to-right" evidence="7">
        <dbReference type="Rhea" id="RHEA:53333"/>
    </physiologicalReaction>
</comment>
<comment type="catalytic activity">
    <reaction evidence="25">
        <text>(8S)-hydroperoxy-(5Z,9E,11Z,14Z)-eicosatetraenoate + O2 = (8S,15S)-dihydroperoxy-(5Z,9E,11Z,13E)-eicosatetraenoate</text>
        <dbReference type="Rhea" id="RHEA:50932"/>
        <dbReference type="ChEBI" id="CHEBI:15379"/>
        <dbReference type="ChEBI" id="CHEBI:75322"/>
        <dbReference type="ChEBI" id="CHEBI:133899"/>
    </reaction>
    <physiologicalReaction direction="left-to-right" evidence="25">
        <dbReference type="Rhea" id="RHEA:50933"/>
    </physiologicalReaction>
</comment>
<comment type="catalytic activity">
    <reaction evidence="10">
        <text>N-(5Z,8Z,11Z,14Z)-eicosatetraenoyl-L-alanine + O2 = N-(15S)-hydroperoxy-(5Z,8Z,11Z,13E)-eicosatetraenoyl-alanine</text>
        <dbReference type="Rhea" id="RHEA:50184"/>
        <dbReference type="ChEBI" id="CHEBI:15379"/>
        <dbReference type="ChEBI" id="CHEBI:132071"/>
        <dbReference type="ChEBI" id="CHEBI:132077"/>
    </reaction>
    <physiologicalReaction direction="left-to-right" evidence="26">
        <dbReference type="Rhea" id="RHEA:50185"/>
    </physiologicalReaction>
</comment>
<comment type="catalytic activity">
    <reaction evidence="10">
        <text>N-(5Z,8Z,11Z,14Z)-eicosatetraenoyl-gamma-aminobutanoate + O2 = N-(15S)-hydroperoxy-(5Z,8Z,11Z,13E)-eicosatetraenoyl-gamma-aminobutanoate</text>
        <dbReference type="Rhea" id="RHEA:50180"/>
        <dbReference type="ChEBI" id="CHEBI:15379"/>
        <dbReference type="ChEBI" id="CHEBI:132072"/>
        <dbReference type="ChEBI" id="CHEBI:132078"/>
    </reaction>
    <physiologicalReaction direction="left-to-right" evidence="10">
        <dbReference type="Rhea" id="RHEA:50181"/>
    </physiologicalReaction>
</comment>
<comment type="catalytic activity">
    <reaction evidence="10">
        <text>N-(5Z,8Z,11Z,14Z)-eicosatetraenoyl-glycine + O2 = N-(15S)-hydroperoxy-(5Z,8Z,11Z,13E)-eicosatetraenoyl-glycine</text>
        <dbReference type="Rhea" id="RHEA:50188"/>
        <dbReference type="ChEBI" id="CHEBI:15379"/>
        <dbReference type="ChEBI" id="CHEBI:59002"/>
        <dbReference type="ChEBI" id="CHEBI:132076"/>
    </reaction>
    <physiologicalReaction direction="left-to-right" evidence="10">
        <dbReference type="Rhea" id="RHEA:50189"/>
    </physiologicalReaction>
</comment>
<comment type="catalytic activity">
    <reaction evidence="12">
        <text>N-(5Z,8Z,11Z,14Z)-eicosatetraenoyl-taurine + O2 = N-(15S)-hydroperoxy-(5Z,8Z,11Z,13E)-eicosatetraenoyl-taurine</text>
        <dbReference type="Rhea" id="RHEA:50156"/>
        <dbReference type="ChEBI" id="CHEBI:15379"/>
        <dbReference type="ChEBI" id="CHEBI:132060"/>
        <dbReference type="ChEBI" id="CHEBI:132062"/>
    </reaction>
    <physiologicalReaction direction="left-to-right" evidence="27">
        <dbReference type="Rhea" id="RHEA:50157"/>
    </physiologicalReaction>
</comment>
<comment type="catalytic activity">
    <reaction evidence="7">
        <text>2-(5Z,8Z,11Z,14Z-eicosatetraenoyl)-glycerol + O2 = 2-[12-hydroperoxy-(5Z,8Z,10E,14Z)-eicosatetraenoyl]-glycerol</text>
        <dbReference type="Rhea" id="RHEA:63224"/>
        <dbReference type="ChEBI" id="CHEBI:15379"/>
        <dbReference type="ChEBI" id="CHEBI:52392"/>
        <dbReference type="ChEBI" id="CHEBI:146254"/>
    </reaction>
    <physiologicalReaction direction="left-to-right" evidence="7">
        <dbReference type="Rhea" id="RHEA:63225"/>
    </physiologicalReaction>
</comment>
<comment type="catalytic activity">
    <reaction evidence="18">
        <text>1-octadecanoyl-2-(5Z,8Z,11Z,14Z-eicosatetraenoyl)-sn-glycero-3-phosphocholine + O2 = 1-octadecanoyl-2-(15-hydroperoxy-5Z,8Z,11Z,13E-eicosatetraenoyl)-sn-glycero-3-phosphocholine</text>
        <dbReference type="Rhea" id="RHEA:63264"/>
        <dbReference type="ChEBI" id="CHEBI:15379"/>
        <dbReference type="ChEBI" id="CHEBI:74965"/>
        <dbReference type="ChEBI" id="CHEBI:146283"/>
    </reaction>
    <physiologicalReaction direction="left-to-right" evidence="29">
        <dbReference type="Rhea" id="RHEA:63265"/>
    </physiologicalReaction>
</comment>
<comment type="catalytic activity">
    <reaction evidence="18">
        <text>a 1-acyl-2-(5Z,8Z,11Z,14Z-eicosatetraenoyl)-sn-glycero-3-phospho-(1D-myo-inositol) + O2 = a 1-acyl-2-(15-hydroperoxy-5Z,8Z,11Z,13E-eicosatetraenoyl)-sn-glycero-3-phospho-(1D-myo-inositol)</text>
        <dbReference type="Rhea" id="RHEA:63276"/>
        <dbReference type="ChEBI" id="CHEBI:15379"/>
        <dbReference type="ChEBI" id="CHEBI:75243"/>
        <dbReference type="ChEBI" id="CHEBI:146285"/>
    </reaction>
    <physiologicalReaction direction="left-to-right" evidence="29">
        <dbReference type="Rhea" id="RHEA:63277"/>
    </physiologicalReaction>
</comment>
<comment type="catalytic activity">
    <reaction evidence="18">
        <text>a 1-acyl-2-(8Z,11Z,14Z-eicosatrienoyl)-sn-glycero-3-phospho-(1D-myo-inositol) + O2 = a 1-acyl-2-(15-hydroperoxy-8Z,11Z,13E-eicosatrienoyl)-sn-glycero-3-phospho-(1D-myo-inositol)</text>
        <dbReference type="Rhea" id="RHEA:63280"/>
        <dbReference type="ChEBI" id="CHEBI:15379"/>
        <dbReference type="ChEBI" id="CHEBI:146286"/>
        <dbReference type="ChEBI" id="CHEBI:146287"/>
    </reaction>
    <physiologicalReaction direction="left-to-right" evidence="29">
        <dbReference type="Rhea" id="RHEA:63281"/>
    </physiologicalReaction>
</comment>
<comment type="catalytic activity">
    <reaction evidence="18">
        <text>1-octadecanoyl-2-(5Z,8Z,11Z,14Z)-eicosatetraenoyl-sn-glycero-3-phosphoethanolamine + O2 = 1-octadecanoyl-2-(15-hydroperoxy-5Z,8Z,11Z,13E-eicosatetraenoyl)-sn-glycero-3-phosphoethanolamine</text>
        <dbReference type="Rhea" id="RHEA:63268"/>
        <dbReference type="ChEBI" id="CHEBI:15379"/>
        <dbReference type="ChEBI" id="CHEBI:78268"/>
        <dbReference type="ChEBI" id="CHEBI:146282"/>
    </reaction>
    <physiologicalReaction direction="left-to-right" evidence="29">
        <dbReference type="Rhea" id="RHEA:63269"/>
    </physiologicalReaction>
</comment>
<comment type="catalytic activity">
    <reaction evidence="18">
        <text>1-octadecanoyl-2-(5Z,8Z,11Z,14Z-eicosatetraenoyl)-sn-glycero-3-phospho-(1D-myo-inositol) + O2 = 1-octadecanoyl-2-(15-hydroperoxy-5Z,8Z,11Z,13E-eicosatetraenoyl)-sn-glycero-3-phospho-(1D-myo-inositol)</text>
        <dbReference type="Rhea" id="RHEA:63272"/>
        <dbReference type="ChEBI" id="CHEBI:15379"/>
        <dbReference type="ChEBI" id="CHEBI:133606"/>
        <dbReference type="ChEBI" id="CHEBI:146284"/>
    </reaction>
    <physiologicalReaction direction="left-to-right" evidence="29">
        <dbReference type="Rhea" id="RHEA:63273"/>
    </physiologicalReaction>
</comment>
<comment type="catalytic activity">
    <reaction evidence="18">
        <text>(8Z,11Z,14Z)-eicosatrienoate + O2 = 15-hydroperoxy-(8Z,11Z,13E)-eicosatrienoate</text>
        <dbReference type="Rhea" id="RHEA:63312"/>
        <dbReference type="ChEBI" id="CHEBI:15379"/>
        <dbReference type="ChEBI" id="CHEBI:71589"/>
        <dbReference type="ChEBI" id="CHEBI:146292"/>
    </reaction>
    <physiologicalReaction direction="left-to-right" evidence="18">
        <dbReference type="Rhea" id="RHEA:63313"/>
    </physiologicalReaction>
</comment>
<comment type="catalytic activity">
    <reaction evidence="19">
        <text>(7S)-hydroperoxy-(4Z,8E,10Z,13Z,16Z,19Z)-docosahexaenoate + O2 = (7S,17S)-dihydroperoxy-(4Z,8E,10Z,13Z,15E,19Z)-docosahexaenoate</text>
        <dbReference type="Rhea" id="RHEA:64728"/>
        <dbReference type="ChEBI" id="CHEBI:15379"/>
        <dbReference type="ChEBI" id="CHEBI:140349"/>
        <dbReference type="ChEBI" id="CHEBI:156049"/>
    </reaction>
    <physiologicalReaction direction="left-to-right" evidence="30">
        <dbReference type="Rhea" id="RHEA:64729"/>
    </physiologicalReaction>
</comment>
<comment type="catalytic activity">
    <reaction evidence="3">
        <text>(5Z,8Z,11Z,14Z)-eicosatetraenoate + O2 = 15-hydroperoxy-(5Z,8Z,11Z,13E)-eicosatetraenoate</text>
        <dbReference type="Rhea" id="RHEA:48832"/>
        <dbReference type="ChEBI" id="CHEBI:15379"/>
        <dbReference type="ChEBI" id="CHEBI:32395"/>
        <dbReference type="ChEBI" id="CHEBI:90821"/>
    </reaction>
    <physiologicalReaction direction="left-to-right" evidence="24">
        <dbReference type="Rhea" id="RHEA:48833"/>
    </physiologicalReaction>
</comment>
<comment type="cofactor">
    <cofactor evidence="2 16">
        <name>Fe cation</name>
        <dbReference type="ChEBI" id="CHEBI:24875"/>
    </cofactor>
    <text evidence="2 16">Binds 1 Fe cation per subunit.</text>
</comment>
<comment type="biophysicochemical properties">
    <kinetics>
        <KM evidence="3">1100 uM for arachidonate (isoform D at pH 7.4 and 20 degrees Celsius)</KM>
        <KM evidence="3">10 uM for linoleate (isoform A at pH 7.4 and 20 degrees Celsius)</KM>
        <KM evidence="3">25 uM for (5Z,8Z,11Z,14Z)-eicosatetraenoate (isoform A at pH 7.4 and 20 degrees Celsius)</KM>
        <KM evidence="7">23 uM for (5Z,8Z,11Z,14Z)-eicosatetraenoate (Sf9-expressed enzyme)</KM>
        <KM evidence="7">15 uM for (5Z,8Z,11Z,14Z)-eicosatetraenoate (E.coli-expressed enzyme)</KM>
        <KM evidence="7">9 uM for 2-(5Z,8Z,11Z,14Z-eicosatetraenoyl)-glycerol (Sf9-expressed enzyme)</KM>
        <KM evidence="7">8 uM for 2-(5Z,8Z,11Z,14Z-eicosatetraenoyl)-glycerol (E.coli-expressed enzyme)</KM>
        <KM evidence="7">14 uM for anandamide (Sf9-expressed enzyme)</KM>
        <KM evidence="7">11 uM for anandamide (E. Coli-expressed enzyme)</KM>
        <KM evidence="10">8 uM for (5Z,8Z,11Z,14Z)-eicosatetraenoate</KM>
        <KM evidence="10">11 uM for N-(5Z,8Z,11Z,14Z)-eicosatetraenoyl-glycine</KM>
        <KM evidence="10">6 uM for N-(5Z,8Z,11Z,14Z)-eicosatetraenoyl-alanine</KM>
        <KM evidence="10">8 uM for N-(5Z,8Z,11Z,14Z)-eicosatetraenoyl-gamma-aminobutanoate</KM>
        <KM evidence="15">1.2 uM for (5Z,8Z,11Z,14Z)-eicosatetraenoate</KM>
        <KM evidence="17">4 uM for (5Z,8Z,11Z,14Z)-eicosatetraenoate</KM>
        <KM evidence="17">3.3 uM for (5S)-hydroxy-(6E,8Z,11Z,14Z)-eicosatetraenoate</KM>
        <KM evidence="17">19 uM for (5S)-hydroperoxy-(6E,8Z,11Z,14Z)-eicosatetraenoate</KM>
        <KM evidence="18">1.74 uM for (5Z,8Z,11Z,14Z)-eicosatetraenoate</KM>
        <KM evidence="18">3.46 uM for (8Z,11Z,14Z)-eicosatrienoate</KM>
        <Vmax evidence="3">4.0 umol/min/mg enzyme with arachidonate as substrate (isoform A at pH 7.4 and 20 degrees Celsius)</Vmax>
        <Vmax evidence="3">2.0 umol/min/mg enzyme with arachidonate as substrate (isoform D at pH 7.4 and 20 degrees Celsius)</Vmax>
        <Vmax evidence="3">4.0 umol/min/mg enzyme with linoleate as substrate (isoform A at pH 7.4 and 20 degrees Celsius)</Vmax>
        <Vmax evidence="7">0.82 nmol/sec/mg enzyme with (5Z,8Z,11Z,14Z)-eicosatetraenoate (Sf9-expressed enzyme)</Vmax>
        <Vmax evidence="7">4.3 nmol/sec/mg enzyme with (5Z,8Z,11Z,14Z)-eicosatetraenoate (E.coli-expressed enzyme)</Vmax>
        <Vmax evidence="7">9.0 nmol/sec/mg enzyme with 2-(5Z,8Z,11Z,14Z-eicosatetraenoyl)-glycerol (Sf9-expressed enzyme)</Vmax>
        <Vmax evidence="7">8.0 nmol/sec/mg enzyme with 2-(5Z,8Z,11Z,14Z-eicosatetraenoyl)-glycerol (E.coli-expressed enzyme)</Vmax>
        <Vmax evidence="7">14.0 nmol/sec/mg enzyme with anandamide (Sf9-expressed enzyme)</Vmax>
        <Vmax evidence="7">11.0 nmol/sec/mg enzyme with anandamide (E.coli-expressed enzyme)</Vmax>
        <text evidence="10 15 17 18">kcat is 2 sec(-1) for (5Z,8Z,11Z,14Z)-eicosatetraenoate. kcat is 2.1 sec(-1) for N-(5Z,8Z,11Z,14Z)-eicosatetraenoyl-glycine. kcat is 2 sec(-1) for N-(5Z,8Z,11Z,14Z)-eicosatetraenoyl-alanine. kcat is 2 sec(-1) for N-(5Z,8Z,11Z,14Z)-eicosatetraenoyl-gamma-aminobutanoate (PubMed:17493578). kcat is 0.18 sec(-1) for (5Z,8Z,11Z,14Z)-eicosatetraenoate (PubMed:24282679). kcat is 1 sec(-1) for (5Z,8Z,11Z,14Z)-eicosatetraenoate. kcat is 2.1 sec(-1) for (5S)-hydroxy-(6E,8Z,11Z,14Z)-eicosatetraenoate. kcat is 1.5 sec(-1) for (5S)-hydroperoxy-(6E,8Z,11Z,14Z)-eicosatetraenoate (PubMed:27145229). kcat is 0.46 sec(-1) for (5Z,8Z,11Z,14Z)-eicosatetraenoate. kcat is 0.31 sec(-1) for (8Z,11Z,14Z)-eicosatrienoate (PubMed:27435673).</text>
    </kinetics>
</comment>
<comment type="pathway">
    <text evidence="3">Lipid metabolism; hydroperoxy eicosatetraenoic acid biosynthesis.</text>
</comment>
<comment type="interaction">
    <interactant intactId="EBI-12150557">
        <id>O15296</id>
    </interactant>
    <interactant intactId="EBI-2810325">
        <id>Q96NT0</id>
        <label>CCDC115</label>
    </interactant>
    <organismsDiffer>false</organismsDiffer>
    <experiments>3</experiments>
</comment>
<comment type="interaction">
    <interactant intactId="EBI-12150557">
        <id>O15296</id>
    </interactant>
    <interactant intactId="EBI-1188472">
        <id>P78358</id>
        <label>CTAG1B</label>
    </interactant>
    <organismsDiffer>false</organismsDiffer>
    <experiments>3</experiments>
</comment>
<comment type="interaction">
    <interactant intactId="EBI-12150557">
        <id>O15296</id>
    </interactant>
    <interactant intactId="EBI-6918743">
        <id>Q9H3M0</id>
        <label>KCNF1</label>
    </interactant>
    <organismsDiffer>false</organismsDiffer>
    <experiments>3</experiments>
</comment>
<comment type="interaction">
    <interactant intactId="EBI-12150557">
        <id>O15296</id>
    </interactant>
    <interactant intactId="EBI-413374">
        <id>P10276</id>
        <label>RARA</label>
    </interactant>
    <organismsDiffer>false</organismsDiffer>
    <experiments>3</experiments>
</comment>
<comment type="interaction">
    <interactant intactId="EBI-12150557">
        <id>O15296</id>
    </interactant>
    <interactant intactId="EBI-1756205">
        <id>Q9BWF2</id>
        <label>TRAIP</label>
    </interactant>
    <organismsDiffer>false</organismsDiffer>
    <experiments>3</experiments>
</comment>
<comment type="interaction">
    <interactant intactId="EBI-12150557">
        <id>O15296</id>
    </interactant>
    <interactant intactId="EBI-81290">
        <id>P19474</id>
        <label>TRIM21</label>
    </interactant>
    <organismsDiffer>false</organismsDiffer>
    <experiments>3</experiments>
</comment>
<comment type="subcellular location">
    <molecule>Isoform A</molecule>
    <subcellularLocation>
        <location evidence="8">Nucleus</location>
    </subcellularLocation>
    <text evidence="8">Other isoforms are excluded from the nucleus.</text>
</comment>
<comment type="subcellular location">
    <subcellularLocation>
        <location evidence="8">Cytoplasm</location>
        <location evidence="8">Cytosol</location>
    </subcellularLocation>
    <subcellularLocation>
        <location evidence="8 18">Cell membrane</location>
    </subcellularLocation>
    <subcellularLocation>
        <location evidence="8">Cytoplasm</location>
        <location evidence="8">Cytoskeleton</location>
    </subcellularLocation>
    <subcellularLocation>
        <location evidence="3 16">Membrane</location>
        <topology evidence="16">Peripheral membrane protein</topology>
    </subcellularLocation>
    <subcellularLocation>
        <location evidence="8">Cell junction</location>
        <location evidence="8">Adherens junction</location>
    </subcellularLocation>
    <subcellularLocation>
        <location evidence="8">Cell junction</location>
        <location evidence="8">Focal adhesion</location>
    </subcellularLocation>
    <text evidence="3 8 16 18">Predominantly cytosolic; becomes enriched at membranes upon calcium binding.</text>
</comment>
<comment type="alternative products">
    <event type="alternative splicing"/>
    <isoform>
        <id>O15296-1</id>
        <name>A</name>
        <name>15-LOb1</name>
        <sequence type="displayed"/>
    </isoform>
    <isoform>
        <id>O15296-2</id>
        <name>B</name>
        <name>15-LOX2sv-b</name>
        <sequence type="described" ref="VSP_003142 VSP_003143"/>
    </isoform>
    <isoform>
        <id>O15296-3</id>
        <name>C</name>
        <name>15-LOX2sv-c</name>
        <sequence type="described" ref="VSP_003144 VSP_003145"/>
    </isoform>
    <isoform>
        <id>O15296-4</id>
        <name>D</name>
        <name>15-LOX2sv-a</name>
        <name>15-LOb2</name>
        <sequence type="described" ref="VSP_003142"/>
    </isoform>
</comment>
<comment type="tissue specificity">
    <text evidence="3 5 20">Expressed in hair, prostate, lung, ovary, lymph node, spinal cord and cornea.</text>
</comment>
<comment type="induction">
    <text evidence="13">Up-regulated by UV-irradiation.</text>
</comment>
<comment type="domain">
    <text>The PLAT domain can bind calcium ions; this promotes association with membranes.</text>
</comment>
<comment type="similarity">
    <text evidence="23">Belongs to the lipoxygenase family.</text>
</comment>
<comment type="sequence caution" evidence="23">
    <conflict type="erroneous gene model prediction">
        <sequence resource="EMBL-CDS" id="AAD37786"/>
    </conflict>
</comment>
<keyword id="KW-0002">3D-structure</keyword>
<keyword id="KW-0025">Alternative splicing</keyword>
<keyword id="KW-0106">Calcium</keyword>
<keyword id="KW-0965">Cell junction</keyword>
<keyword id="KW-1003">Cell membrane</keyword>
<keyword id="KW-0963">Cytoplasm</keyword>
<keyword id="KW-0206">Cytoskeleton</keyword>
<keyword id="KW-0223">Dioxygenase</keyword>
<keyword id="KW-0408">Iron</keyword>
<keyword id="KW-0443">Lipid metabolism</keyword>
<keyword id="KW-0446">Lipid-binding</keyword>
<keyword id="KW-0472">Membrane</keyword>
<keyword id="KW-0479">Metal-binding</keyword>
<keyword id="KW-0539">Nucleus</keyword>
<keyword id="KW-0560">Oxidoreductase</keyword>
<keyword id="KW-1267">Proteomics identification</keyword>
<keyword id="KW-1185">Reference proteome</keyword>
<organism>
    <name type="scientific">Homo sapiens</name>
    <name type="common">Human</name>
    <dbReference type="NCBI Taxonomy" id="9606"/>
    <lineage>
        <taxon>Eukaryota</taxon>
        <taxon>Metazoa</taxon>
        <taxon>Chordata</taxon>
        <taxon>Craniata</taxon>
        <taxon>Vertebrata</taxon>
        <taxon>Euteleostomi</taxon>
        <taxon>Mammalia</taxon>
        <taxon>Eutheria</taxon>
        <taxon>Euarchontoglires</taxon>
        <taxon>Primates</taxon>
        <taxon>Haplorrhini</taxon>
        <taxon>Catarrhini</taxon>
        <taxon>Hominidae</taxon>
        <taxon>Homo</taxon>
    </lineage>
</organism>
<proteinExistence type="evidence at protein level"/>
<name>LX15B_HUMAN</name>
<reference key="1">
    <citation type="journal article" date="1997" name="Proc. Natl. Acad. Sci. U.S.A.">
        <title>Discovery of a second 15S-lipoxygenase in humans.</title>
        <authorList>
            <person name="Brash A.R."/>
            <person name="Boeglin W.E."/>
            <person name="Chang M.S."/>
        </authorList>
    </citation>
    <scope>NUCLEOTIDE SEQUENCE [MRNA] (ISOFORM A)</scope>
    <scope>VARIANT ARG-656</scope>
    <scope>CATALYTIC ACTIVITY</scope>
    <scope>TISSUE SPECIFICITY</scope>
    <scope>FUNCTION</scope>
    <source>
        <tissue>Skin</tissue>
    </source>
</reference>
<reference key="2">
    <citation type="journal article" date="2001" name="Genomics">
        <title>A gene cluster encoding human epidermis-type lipoxygenases at chromosome 17p13.1: cloning, physical mapping, and expression.</title>
        <authorList>
            <person name="Krieg P."/>
            <person name="Marks F."/>
            <person name="Fuerstenberger G."/>
        </authorList>
    </citation>
    <scope>NUCLEOTIDE SEQUENCE [GENOMIC DNA]</scope>
    <scope>VARIANT ARG-656</scope>
    <scope>TISSUE SPECIFICITY</scope>
</reference>
<reference key="3">
    <citation type="journal article" date="2002" name="J. Biol. Chem.">
        <title>Evidence that arachidonate 15-lipoxygenase 2 is a negative cell cycle regulator in normal prostate epithelial cells.</title>
        <authorList>
            <person name="Tang S."/>
            <person name="Bhatia B."/>
            <person name="Maldonado C.J."/>
            <person name="Yang P."/>
            <person name="Newman R.A."/>
            <person name="Liu J."/>
            <person name="Chandra D."/>
            <person name="Traag J."/>
            <person name="Klein R.D."/>
            <person name="Fischer S.M."/>
            <person name="Chopra D."/>
            <person name="Shen J."/>
            <person name="Zhau H.E."/>
            <person name="Chung L.W.K."/>
            <person name="Tang D.G."/>
        </authorList>
    </citation>
    <scope>NUCLEOTIDE SEQUENCE [MRNA] (ISOFORMS A; B; C AND D)</scope>
    <scope>VARIANTS HIS-486 AND ARG-656</scope>
    <scope>FUNCTION IN CELL CYCLE PROGRESSION</scope>
</reference>
<reference key="4">
    <citation type="journal article" date="2006" name="Nature">
        <title>DNA sequence of human chromosome 17 and analysis of rearrangement in the human lineage.</title>
        <authorList>
            <person name="Zody M.C."/>
            <person name="Garber M."/>
            <person name="Adams D.J."/>
            <person name="Sharpe T."/>
            <person name="Harrow J."/>
            <person name="Lupski J.R."/>
            <person name="Nicholson C."/>
            <person name="Searle S.M."/>
            <person name="Wilming L."/>
            <person name="Young S.K."/>
            <person name="Abouelleil A."/>
            <person name="Allen N.R."/>
            <person name="Bi W."/>
            <person name="Bloom T."/>
            <person name="Borowsky M.L."/>
            <person name="Bugalter B.E."/>
            <person name="Butler J."/>
            <person name="Chang J.L."/>
            <person name="Chen C.-K."/>
            <person name="Cook A."/>
            <person name="Corum B."/>
            <person name="Cuomo C.A."/>
            <person name="de Jong P.J."/>
            <person name="DeCaprio D."/>
            <person name="Dewar K."/>
            <person name="FitzGerald M."/>
            <person name="Gilbert J."/>
            <person name="Gibson R."/>
            <person name="Gnerre S."/>
            <person name="Goldstein S."/>
            <person name="Grafham D.V."/>
            <person name="Grocock R."/>
            <person name="Hafez N."/>
            <person name="Hagopian D.S."/>
            <person name="Hart E."/>
            <person name="Norman C.H."/>
            <person name="Humphray S."/>
            <person name="Jaffe D.B."/>
            <person name="Jones M."/>
            <person name="Kamal M."/>
            <person name="Khodiyar V.K."/>
            <person name="LaButti K."/>
            <person name="Laird G."/>
            <person name="Lehoczky J."/>
            <person name="Liu X."/>
            <person name="Lokyitsang T."/>
            <person name="Loveland J."/>
            <person name="Lui A."/>
            <person name="Macdonald P."/>
            <person name="Major J.E."/>
            <person name="Matthews L."/>
            <person name="Mauceli E."/>
            <person name="McCarroll S.A."/>
            <person name="Mihalev A.H."/>
            <person name="Mudge J."/>
            <person name="Nguyen C."/>
            <person name="Nicol R."/>
            <person name="O'Leary S.B."/>
            <person name="Osoegawa K."/>
            <person name="Schwartz D.C."/>
            <person name="Shaw-Smith C."/>
            <person name="Stankiewicz P."/>
            <person name="Steward C."/>
            <person name="Swarbreck D."/>
            <person name="Venkataraman V."/>
            <person name="Whittaker C.A."/>
            <person name="Yang X."/>
            <person name="Zimmer A.R."/>
            <person name="Bradley A."/>
            <person name="Hubbard T."/>
            <person name="Birren B.W."/>
            <person name="Rogers J."/>
            <person name="Lander E.S."/>
            <person name="Nusbaum C."/>
        </authorList>
    </citation>
    <scope>NUCLEOTIDE SEQUENCE [LARGE SCALE GENOMIC DNA]</scope>
</reference>
<reference key="5">
    <citation type="submission" date="2005-09" db="EMBL/GenBank/DDBJ databases">
        <authorList>
            <person name="Mural R.J."/>
            <person name="Istrail S."/>
            <person name="Sutton G.G."/>
            <person name="Florea L."/>
            <person name="Halpern A.L."/>
            <person name="Mobarry C.M."/>
            <person name="Lippert R."/>
            <person name="Walenz B."/>
            <person name="Shatkay H."/>
            <person name="Dew I."/>
            <person name="Miller J.R."/>
            <person name="Flanigan M.J."/>
            <person name="Edwards N.J."/>
            <person name="Bolanos R."/>
            <person name="Fasulo D."/>
            <person name="Halldorsson B.V."/>
            <person name="Hannenhalli S."/>
            <person name="Turner R."/>
            <person name="Yooseph S."/>
            <person name="Lu F."/>
            <person name="Nusskern D.R."/>
            <person name="Shue B.C."/>
            <person name="Zheng X.H."/>
            <person name="Zhong F."/>
            <person name="Delcher A.L."/>
            <person name="Huson D.H."/>
            <person name="Kravitz S.A."/>
            <person name="Mouchard L."/>
            <person name="Reinert K."/>
            <person name="Remington K.A."/>
            <person name="Clark A.G."/>
            <person name="Waterman M.S."/>
            <person name="Eichler E.E."/>
            <person name="Adams M.D."/>
            <person name="Hunkapiller M.W."/>
            <person name="Myers E.W."/>
            <person name="Venter J.C."/>
        </authorList>
    </citation>
    <scope>NUCLEOTIDE SEQUENCE [LARGE SCALE GENOMIC DNA]</scope>
</reference>
<reference key="6">
    <citation type="journal article" date="2004" name="Genome Res.">
        <title>The status, quality, and expansion of the NIH full-length cDNA project: the Mammalian Gene Collection (MGC).</title>
        <authorList>
            <consortium name="The MGC Project Team"/>
        </authorList>
    </citation>
    <scope>NUCLEOTIDE SEQUENCE [LARGE SCALE MRNA] (ISOFORM A)</scope>
    <scope>VARIANT ARG-656</scope>
    <source>
        <tissue>Skin</tissue>
    </source>
</reference>
<reference key="7">
    <citation type="journal article" date="1999" name="Eur. J. Biochem.">
        <title>Differential characteristics of human 15-lipoxygenase isozymes and a novel splice variant of 15S-lipoxygenase.</title>
        <authorList>
            <person name="Kilty I."/>
            <person name="Logan A."/>
            <person name="Vickers P.J."/>
        </authorList>
    </citation>
    <scope>NUCLEOTIDE SEQUENCE [GENOMIC DNA] OF 337-484</scope>
    <scope>ALTERNATIVE SPLICING (ISOFORMS A AND D)</scope>
    <scope>CATALYTIC ACTIVITY</scope>
    <scope>BIOPHYSICOCHEMICAL PROPERTIES</scope>
    <scope>KINETIC PARAMETERS</scope>
    <scope>PATHWAY</scope>
    <scope>SUBCELLULAR LOCATION</scope>
    <scope>TISSUE SPECIFICITY</scope>
</reference>
<reference key="8">
    <citation type="journal article" date="2000" name="J. Biol. Chem.">
        <title>Identification of amino acid determinants of the positional specificity of mouse 8S-lipoxygenase and human 15S-lipoxygenase-2.</title>
        <authorList>
            <person name="Jisaka M."/>
            <person name="Kim R.B."/>
            <person name="Boeglin W.E."/>
            <person name="Brash A.R."/>
        </authorList>
    </citation>
    <scope>FUNCTION AS A 15S-LIPOXYGENASE</scope>
    <scope>CATALYTIC ACTIVITY</scope>
    <scope>MUTAGENESIS OF ASP-602 AND VAL-603</scope>
</reference>
<reference key="9">
    <citation type="journal article" date="2002" name="J. Biol. Chem.">
        <title>15-Lipoxygenase metabolism of 2-arachidonylglycerol. Generation of a peroxisome proliferator-activated receptor alpha agonist.</title>
        <authorList>
            <person name="Kozak K.R."/>
            <person name="Gupta R.A."/>
            <person name="Moody J.S."/>
            <person name="Ji C."/>
            <person name="Boeglin W.E."/>
            <person name="DuBois R.N."/>
            <person name="Brash A.R."/>
            <person name="Marnett L.J."/>
        </authorList>
    </citation>
    <scope>CATALYTIC ACTIVITY</scope>
    <scope>FUNCTION</scope>
    <scope>BIOPHYSICOCHEMICAL PROPERTIES</scope>
</reference>
<reference key="10">
    <citation type="journal article" date="2003" name="J. Biol. Chem.">
        <title>Subcellular localization and tumor-suppressive functions of 15-lipoxygenase 2 (15-LOX2) and its splice variants.</title>
        <authorList>
            <person name="Bhatia B."/>
            <person name="Maldonado C.J."/>
            <person name="Tang S."/>
            <person name="Chandra D."/>
            <person name="Klein R.D."/>
            <person name="Chopra D."/>
            <person name="Shappell S.B."/>
            <person name="Yang P."/>
            <person name="Newman R.A."/>
            <person name="Tang D.G."/>
        </authorList>
    </citation>
    <scope>FUNCTION IN CELL PROLIFERATION</scope>
    <scope>SUBCELLULAR LOCATION</scope>
    <scope>CATALYTIC ACTIVITY</scope>
</reference>
<reference key="11">
    <citation type="journal article" date="2005" name="Biochem. Biophys. Res. Commun.">
        <title>Double dioxygenation by mouse 8S-lipoxygenase: specific formation of a potent peroxisome proliferator-activated receptor alpha agonist.</title>
        <authorList>
            <person name="Jisaka M."/>
            <person name="Iwanaga C."/>
            <person name="Takahashi N."/>
            <person name="Goto T."/>
            <person name="Kawada T."/>
            <person name="Yamamoto T."/>
            <person name="Ikeda I."/>
            <person name="Nishimura K."/>
            <person name="Nagaya T."/>
            <person name="Fushiki T."/>
            <person name="Yokota K."/>
        </authorList>
    </citation>
    <scope>FUNCTION</scope>
    <scope>CATALYTIC ACTIVITY</scope>
</reference>
<reference key="12">
    <citation type="journal article" date="2007" name="Arch. Biochem. Biophys.">
        <title>Oxidative metabolism of lipoamino acids and vanilloids by lipoxygenases and cyclooxygenases.</title>
        <authorList>
            <person name="Prusakiewicz J.J."/>
            <person name="Turman M.V."/>
            <person name="Vila A."/>
            <person name="Ball H.L."/>
            <person name="Al-Mestarihi A.H."/>
            <person name="Di Marzo V."/>
            <person name="Marnett L.J."/>
        </authorList>
    </citation>
    <scope>FUNCTION</scope>
    <scope>CATALYTIC ACTIVITY</scope>
    <scope>BIOPHYSICOCHEMICAL PROPERTIES</scope>
</reference>
<reference key="13">
    <citation type="journal article" date="2008" name="Atherosclerosis">
        <title>15-Lipoxygenase-2 expression in human macrophages induces chemokine secretion and T cell migration.</title>
        <authorList>
            <person name="Danielsson K.N."/>
            <person name="Rydberg E.K."/>
            <person name="Ingelsten M."/>
            <person name="Akyuerek L.M."/>
            <person name="Jirholt P."/>
            <person name="Ullstroem C."/>
            <person name="Forsberg G.B."/>
            <person name="Boren J."/>
            <person name="Wiklund O."/>
            <person name="Hulten L.M."/>
        </authorList>
    </citation>
    <scope>FUNCTION IN CYTOKINE SECRETION</scope>
</reference>
<reference key="14">
    <citation type="journal article" date="2008" name="Biochemistry">
        <title>Oxidative metabolism of a fatty acid amide hydrolase-regulated lipid, arachidonoyltaurine.</title>
        <authorList>
            <person name="Turman M.V."/>
            <person name="Kingsley P.J."/>
            <person name="Rouzer C.A."/>
            <person name="Cravatt B.F."/>
            <person name="Marnett L.J."/>
        </authorList>
    </citation>
    <scope>CATALYTIC ACTIVITY</scope>
    <scope>FUNCTION</scope>
</reference>
<reference key="15">
    <citation type="journal article" date="2008" name="FEBS Lett.">
        <title>Reciprocal regulation of 12- and 15-lipoxygenases by UV-irradiation in human keratinocytes.</title>
        <authorList>
            <person name="Yoo H."/>
            <person name="Jeon B."/>
            <person name="Jeon M.S."/>
            <person name="Lee H."/>
            <person name="Kim T.Y."/>
        </authorList>
    </citation>
    <scope>INDUCTION BY UV</scope>
</reference>
<reference key="16">
    <citation type="journal article" date="2012" name="PLoS ONE">
        <title>Arachidonate 15-lipoxygenase type B knockdown leads to reduced lipid accumulation and inflammation in atherosclerosis.</title>
        <authorList>
            <person name="Magnusson L.U."/>
            <person name="Lundqvist A."/>
            <person name="Karlsson M.N."/>
            <person name="Skalen K."/>
            <person name="Levin M."/>
            <person name="Wiklund O."/>
            <person name="Boren J."/>
            <person name="Hulten L.M."/>
        </authorList>
    </citation>
    <scope>FUNCTION</scope>
</reference>
<reference key="17">
    <citation type="journal article" date="2013" name="Redox Biol.">
        <title>Functional characterization of genetic enzyme variations in human lipoxygenases.</title>
        <authorList>
            <person name="Horn T."/>
            <person name="Reddy Kakularam K."/>
            <person name="Anton M."/>
            <person name="Richter C."/>
            <person name="Reddanna P."/>
            <person name="Kuhn H."/>
        </authorList>
    </citation>
    <scope>CATALYTIC ACTIVITY</scope>
    <scope>FUNCTION</scope>
    <scope>BIOPHYSICOCHEMICAL PROPERTIES</scope>
    <scope>VARIANTS ASP-416; HIS-486; ARG-656 AND VAL-676</scope>
    <scope>CHARACTERIZATION OF VARIANTS ASP-416; HIS-486; ARG-656 AND VAL-676</scope>
</reference>
<reference key="18">
    <citation type="journal article" date="2016" name="Biochemistry">
        <title>Strict Regiospecificity of Human Epithelial 15-Lipoxygenase-2 Delineates Its Transcellular Synthesis Potential.</title>
        <authorList>
            <person name="Green A.R."/>
            <person name="Barbour S."/>
            <person name="Horn T."/>
            <person name="Carlos J."/>
            <person name="Raskatov J.A."/>
            <person name="Holman T.R."/>
        </authorList>
    </citation>
    <scope>CATALYTIC ACTIVITY</scope>
    <scope>FUNCTION</scope>
    <scope>BIOPHYSICOCHEMICAL PROPERTIES</scope>
</reference>
<reference key="19">
    <citation type="journal article" date="2016" name="J. Biol. Chem.">
        <title>Membrane-dependent Activities of Human 15-LOX-2 and Its Murine Counterpart: IMPLICATIONS FOR MURINE MODELS OF ATHEROSCLEROSIS.</title>
        <authorList>
            <person name="Bender G."/>
            <person name="Schexnaydre E.E."/>
            <person name="Murphy R.C."/>
            <person name="Uhlson C."/>
            <person name="Newcomer M.E."/>
        </authorList>
    </citation>
    <scope>BIOPHYSICOCHEMICAL PROPERTIES</scope>
    <scope>SUBCELLULAR LOCATION</scope>
    <scope>CATALYTIC ACTIVITY</scope>
    <scope>FUNCTION</scope>
</reference>
<reference key="20">
    <citation type="journal article" date="2020" name="J. Lipid Res.">
        <title>15-Lipoxygenase-1 biosynthesis of 7S,14S-diHDHA implicates 15-lipoxygenase-2 in biosynthesis of resolvin D5.</title>
        <authorList>
            <person name="Perry S.C."/>
            <person name="Kalyanaraman C."/>
            <person name="Tourdot B.E."/>
            <person name="Conrad W.S."/>
            <person name="Akinkugbe O."/>
            <person name="Freedman J.C."/>
            <person name="Holinstat M."/>
            <person name="Jacobson M.P."/>
            <person name="Holman T.R."/>
        </authorList>
    </citation>
    <scope>FUNCTION</scope>
    <scope>CATALYTIC ACTIVITY</scope>
</reference>
<reference key="21">
    <citation type="journal article" date="2014" name="J. Biol. Chem.">
        <title>The structure of human 15-lipoxygenase-2 with a substrate mimic.</title>
        <authorList>
            <person name="Kobe M.J."/>
            <person name="Neau D.B."/>
            <person name="Mitchell C.E."/>
            <person name="Bartlett S.G."/>
            <person name="Newcomer M.E."/>
        </authorList>
    </citation>
    <scope>X-RAY CRYSTALLOGRAPHY (2.63 ANGSTROMS) IN COMPLEX WITH CALCIUM AND IRON</scope>
    <scope>CATALYTIC ACTIVITY</scope>
    <scope>COFACTOR</scope>
    <scope>FUNCTION</scope>
    <scope>SUBCELLULAR LOCATION</scope>
    <scope>MUTAGENESIS OF ASP-39; GLU-44 AND ASP-85</scope>
</reference>
<gene>
    <name evidence="31" type="primary">ALOX15B</name>
</gene>
<evidence type="ECO:0000255" key="1">
    <source>
        <dbReference type="PROSITE-ProRule" id="PRU00152"/>
    </source>
</evidence>
<evidence type="ECO:0000255" key="2">
    <source>
        <dbReference type="PROSITE-ProRule" id="PRU00726"/>
    </source>
</evidence>
<evidence type="ECO:0000269" key="3">
    <source>
    </source>
</evidence>
<evidence type="ECO:0000269" key="4">
    <source>
    </source>
</evidence>
<evidence type="ECO:0000269" key="5">
    <source>
    </source>
</evidence>
<evidence type="ECO:0000269" key="6">
    <source>
    </source>
</evidence>
<evidence type="ECO:0000269" key="7">
    <source>
    </source>
</evidence>
<evidence type="ECO:0000269" key="8">
    <source>
    </source>
</evidence>
<evidence type="ECO:0000269" key="9">
    <source>
    </source>
</evidence>
<evidence type="ECO:0000269" key="10">
    <source>
    </source>
</evidence>
<evidence type="ECO:0000269" key="11">
    <source>
    </source>
</evidence>
<evidence type="ECO:0000269" key="12">
    <source>
    </source>
</evidence>
<evidence type="ECO:0000269" key="13">
    <source>
    </source>
</evidence>
<evidence type="ECO:0000269" key="14">
    <source>
    </source>
</evidence>
<evidence type="ECO:0000269" key="15">
    <source>
    </source>
</evidence>
<evidence type="ECO:0000269" key="16">
    <source>
    </source>
</evidence>
<evidence type="ECO:0000269" key="17">
    <source>
    </source>
</evidence>
<evidence type="ECO:0000269" key="18">
    <source>
    </source>
</evidence>
<evidence type="ECO:0000269" key="19">
    <source>
    </source>
</evidence>
<evidence type="ECO:0000269" key="20">
    <source>
    </source>
</evidence>
<evidence type="ECO:0000303" key="21">
    <source>
    </source>
</evidence>
<evidence type="ECO:0000303" key="22">
    <source>
    </source>
</evidence>
<evidence type="ECO:0000305" key="23"/>
<evidence type="ECO:0000305" key="24">
    <source>
    </source>
</evidence>
<evidence type="ECO:0000305" key="25">
    <source>
    </source>
</evidence>
<evidence type="ECO:0000305" key="26">
    <source>
    </source>
</evidence>
<evidence type="ECO:0000305" key="27">
    <source>
    </source>
</evidence>
<evidence type="ECO:0000305" key="28">
    <source>
    </source>
</evidence>
<evidence type="ECO:0000305" key="29">
    <source>
    </source>
</evidence>
<evidence type="ECO:0000305" key="30">
    <source>
    </source>
</evidence>
<evidence type="ECO:0000312" key="31">
    <source>
        <dbReference type="HGNC" id="HGNC:434"/>
    </source>
</evidence>
<evidence type="ECO:0007829" key="32">
    <source>
        <dbReference type="PDB" id="4NRE"/>
    </source>
</evidence>
<evidence type="ECO:0007829" key="33">
    <source>
        <dbReference type="PDB" id="7LAF"/>
    </source>
</evidence>
<protein>
    <recommendedName>
        <fullName evidence="23">Polyunsaturated fatty acid lipoxygenase ALOX15B</fullName>
    </recommendedName>
    <alternativeName>
        <fullName evidence="21">15-lipoxygenase 2</fullName>
        <shortName evidence="22">15-LOX-2</shortName>
    </alternativeName>
    <alternativeName>
        <fullName>Arachidonate 15-lipoxygenase B</fullName>
        <shortName>15-LOX-B</shortName>
        <ecNumber evidence="4 7 8 10 15 16 20">1.13.11.33</ecNumber>
    </alternativeName>
    <alternativeName>
        <fullName>Arachidonate 15-lipoxygenase type II</fullName>
    </alternativeName>
    <alternativeName>
        <fullName>Linoleate 13-lipoxygenase 15-LOb</fullName>
        <ecNumber evidence="18 24">1.13.11.-</ecNumber>
    </alternativeName>
</protein>
<dbReference type="EC" id="1.13.11.33" evidence="4 7 8 10 15 16 20"/>
<dbReference type="EC" id="1.13.11.-" evidence="18 24"/>
<dbReference type="EMBL" id="U78294">
    <property type="protein sequence ID" value="AAB61706.1"/>
    <property type="molecule type" value="mRNA"/>
</dbReference>
<dbReference type="EMBL" id="AJ305028">
    <property type="protein sequence ID" value="CAC34521.1"/>
    <property type="molecule type" value="Genomic_DNA"/>
</dbReference>
<dbReference type="EMBL" id="AJ305029">
    <property type="protein sequence ID" value="CAC34521.1"/>
    <property type="status" value="JOINED"/>
    <property type="molecule type" value="Genomic_DNA"/>
</dbReference>
<dbReference type="EMBL" id="AJ305030">
    <property type="protein sequence ID" value="CAC34521.1"/>
    <property type="status" value="JOINED"/>
    <property type="molecule type" value="Genomic_DNA"/>
</dbReference>
<dbReference type="EMBL" id="AJ305031">
    <property type="protein sequence ID" value="CAC34521.1"/>
    <property type="status" value="JOINED"/>
    <property type="molecule type" value="Genomic_DNA"/>
</dbReference>
<dbReference type="EMBL" id="AF468051">
    <property type="protein sequence ID" value="AAL76274.1"/>
    <property type="molecule type" value="mRNA"/>
</dbReference>
<dbReference type="EMBL" id="AF468052">
    <property type="protein sequence ID" value="AAL76275.1"/>
    <property type="molecule type" value="mRNA"/>
</dbReference>
<dbReference type="EMBL" id="AF468053">
    <property type="protein sequence ID" value="AAL76276.1"/>
    <property type="molecule type" value="mRNA"/>
</dbReference>
<dbReference type="EMBL" id="AF468054">
    <property type="protein sequence ID" value="AAL76277.1"/>
    <property type="molecule type" value="mRNA"/>
</dbReference>
<dbReference type="EMBL" id="AC129492">
    <property type="status" value="NOT_ANNOTATED_CDS"/>
    <property type="molecule type" value="Genomic_DNA"/>
</dbReference>
<dbReference type="EMBL" id="CH471108">
    <property type="protein sequence ID" value="EAW90098.1"/>
    <property type="molecule type" value="Genomic_DNA"/>
</dbReference>
<dbReference type="EMBL" id="CH471108">
    <property type="protein sequence ID" value="EAW90100.1"/>
    <property type="molecule type" value="Genomic_DNA"/>
</dbReference>
<dbReference type="EMBL" id="BC035217">
    <property type="protein sequence ID" value="AAH35217.1"/>
    <property type="molecule type" value="mRNA"/>
</dbReference>
<dbReference type="EMBL" id="BC063647">
    <property type="protein sequence ID" value="AAH63647.1"/>
    <property type="molecule type" value="mRNA"/>
</dbReference>
<dbReference type="EMBL" id="AF149095">
    <property type="protein sequence ID" value="AAD37786.1"/>
    <property type="status" value="ALT_SEQ"/>
    <property type="molecule type" value="Genomic_DNA"/>
</dbReference>
<dbReference type="CCDS" id="CCDS11128.1">
    <molecule id="O15296-1"/>
</dbReference>
<dbReference type="CCDS" id="CCDS32558.1">
    <molecule id="O15296-4"/>
</dbReference>
<dbReference type="CCDS" id="CCDS32559.1">
    <molecule id="O15296-2"/>
</dbReference>
<dbReference type="RefSeq" id="NP_001034219.1">
    <molecule id="O15296-4"/>
    <property type="nucleotide sequence ID" value="NM_001039130.2"/>
</dbReference>
<dbReference type="RefSeq" id="NP_001034220.1">
    <molecule id="O15296-2"/>
    <property type="nucleotide sequence ID" value="NM_001039131.2"/>
</dbReference>
<dbReference type="RefSeq" id="NP_001132.2">
    <molecule id="O15296-1"/>
    <property type="nucleotide sequence ID" value="NM_001141.3"/>
</dbReference>
<dbReference type="PDB" id="4NRE">
    <property type="method" value="X-ray"/>
    <property type="resolution" value="2.63 A"/>
    <property type="chains" value="A=1-676"/>
</dbReference>
<dbReference type="PDB" id="7LAF">
    <property type="method" value="X-ray"/>
    <property type="resolution" value="2.44 A"/>
    <property type="chains" value="A/B=1-676"/>
</dbReference>
<dbReference type="PDB" id="8VIY">
    <property type="method" value="X-ray"/>
    <property type="resolution" value="2.34 A"/>
    <property type="chains" value="A=1-676"/>
</dbReference>
<dbReference type="PDBsum" id="4NRE"/>
<dbReference type="PDBsum" id="7LAF"/>
<dbReference type="PDBsum" id="8VIY"/>
<dbReference type="SMR" id="O15296"/>
<dbReference type="BioGRID" id="106748">
    <property type="interactions" value="29"/>
</dbReference>
<dbReference type="FunCoup" id="O15296">
    <property type="interactions" value="194"/>
</dbReference>
<dbReference type="IntAct" id="O15296">
    <property type="interactions" value="17"/>
</dbReference>
<dbReference type="STRING" id="9606.ENSP00000369530"/>
<dbReference type="BindingDB" id="O15296"/>
<dbReference type="ChEMBL" id="CHEMBL2457"/>
<dbReference type="DrugCentral" id="O15296"/>
<dbReference type="GuidetoPHARMACOLOGY" id="1389"/>
<dbReference type="SwissLipids" id="SLP:000000651"/>
<dbReference type="SwissLipids" id="SLP:000001469">
    <molecule id="O15296-1"/>
</dbReference>
<dbReference type="SwissLipids" id="SLP:000001470">
    <molecule id="O15296-4"/>
</dbReference>
<dbReference type="iPTMnet" id="O15296"/>
<dbReference type="PhosphoSitePlus" id="O15296"/>
<dbReference type="BioMuta" id="ALOX15B"/>
<dbReference type="MassIVE" id="O15296"/>
<dbReference type="PaxDb" id="9606-ENSP00000369530"/>
<dbReference type="PeptideAtlas" id="O15296"/>
<dbReference type="ProteomicsDB" id="48566">
    <molecule id="O15296-1"/>
</dbReference>
<dbReference type="ProteomicsDB" id="48567">
    <molecule id="O15296-2"/>
</dbReference>
<dbReference type="ProteomicsDB" id="48568">
    <molecule id="O15296-3"/>
</dbReference>
<dbReference type="ProteomicsDB" id="48569">
    <molecule id="O15296-4"/>
</dbReference>
<dbReference type="Antibodypedia" id="12373">
    <property type="antibodies" value="280 antibodies from 31 providers"/>
</dbReference>
<dbReference type="DNASU" id="247"/>
<dbReference type="Ensembl" id="ENST00000380173.6">
    <molecule id="O15296-4"/>
    <property type="protein sequence ID" value="ENSP00000369520.2"/>
    <property type="gene ID" value="ENSG00000179593.16"/>
</dbReference>
<dbReference type="Ensembl" id="ENST00000380183.9">
    <molecule id="O15296-1"/>
    <property type="protein sequence ID" value="ENSP00000369530.4"/>
    <property type="gene ID" value="ENSG00000179593.16"/>
</dbReference>
<dbReference type="Ensembl" id="ENST00000573359.1">
    <molecule id="O15296-2"/>
    <property type="protein sequence ID" value="ENSP00000460332.2"/>
    <property type="gene ID" value="ENSG00000179593.16"/>
</dbReference>
<dbReference type="GeneID" id="247"/>
<dbReference type="KEGG" id="hsa:247"/>
<dbReference type="MANE-Select" id="ENST00000380183.9">
    <property type="protein sequence ID" value="ENSP00000369530.4"/>
    <property type="RefSeq nucleotide sequence ID" value="NM_001141.3"/>
    <property type="RefSeq protein sequence ID" value="NP_001132.2"/>
</dbReference>
<dbReference type="UCSC" id="uc002gju.4">
    <molecule id="O15296-1"/>
    <property type="organism name" value="human"/>
</dbReference>
<dbReference type="AGR" id="HGNC:434"/>
<dbReference type="CTD" id="247"/>
<dbReference type="DisGeNET" id="247"/>
<dbReference type="GeneCards" id="ALOX15B"/>
<dbReference type="HGNC" id="HGNC:434">
    <property type="gene designation" value="ALOX15B"/>
</dbReference>
<dbReference type="HPA" id="ENSG00000179593">
    <property type="expression patterns" value="Tissue enhanced (breast, prostate)"/>
</dbReference>
<dbReference type="MIM" id="603697">
    <property type="type" value="gene"/>
</dbReference>
<dbReference type="neXtProt" id="NX_O15296"/>
<dbReference type="OpenTargets" id="ENSG00000179593"/>
<dbReference type="PharmGKB" id="PA24725"/>
<dbReference type="VEuPathDB" id="HostDB:ENSG00000179593"/>
<dbReference type="eggNOG" id="ENOG502QVKD">
    <property type="taxonomic scope" value="Eukaryota"/>
</dbReference>
<dbReference type="GeneTree" id="ENSGT00940000161510"/>
<dbReference type="HOGENOM" id="CLU_004282_3_3_1"/>
<dbReference type="InParanoid" id="O15296"/>
<dbReference type="OMA" id="WIHRTEV"/>
<dbReference type="OrthoDB" id="407298at2759"/>
<dbReference type="PAN-GO" id="O15296">
    <property type="GO annotations" value="6 GO annotations based on evolutionary models"/>
</dbReference>
<dbReference type="PhylomeDB" id="O15296"/>
<dbReference type="TreeFam" id="TF105320"/>
<dbReference type="BRENDA" id="1.13.11.33">
    <property type="organism ID" value="2681"/>
</dbReference>
<dbReference type="PathwayCommons" id="O15296"/>
<dbReference type="Reactome" id="R-HSA-2142770">
    <property type="pathway name" value="Synthesis of 15-eicosatetraenoic acid derivatives"/>
</dbReference>
<dbReference type="SABIO-RK" id="O15296"/>
<dbReference type="SignaLink" id="O15296"/>
<dbReference type="UniPathway" id="UPA00881"/>
<dbReference type="BioGRID-ORCS" id="247">
    <property type="hits" value="11 hits in 1142 CRISPR screens"/>
</dbReference>
<dbReference type="ChiTaRS" id="ALOX15B">
    <property type="organism name" value="human"/>
</dbReference>
<dbReference type="EvolutionaryTrace" id="O15296"/>
<dbReference type="GeneWiki" id="ALOX15B"/>
<dbReference type="GenomeRNAi" id="247"/>
<dbReference type="Pharos" id="O15296">
    <property type="development level" value="Tchem"/>
</dbReference>
<dbReference type="PRO" id="PR:O15296"/>
<dbReference type="Proteomes" id="UP000005640">
    <property type="component" value="Chromosome 17"/>
</dbReference>
<dbReference type="RNAct" id="O15296">
    <property type="molecule type" value="protein"/>
</dbReference>
<dbReference type="Bgee" id="ENSG00000179593">
    <property type="expression patterns" value="Expressed in upper leg skin and 115 other cell types or tissues"/>
</dbReference>
<dbReference type="ExpressionAtlas" id="O15296">
    <property type="expression patterns" value="baseline and differential"/>
</dbReference>
<dbReference type="GO" id="GO:0005912">
    <property type="term" value="C:adherens junction"/>
    <property type="evidence" value="ECO:0000314"/>
    <property type="project" value="UniProtKB"/>
</dbReference>
<dbReference type="GO" id="GO:0005856">
    <property type="term" value="C:cytoskeleton"/>
    <property type="evidence" value="ECO:0000314"/>
    <property type="project" value="UniProtKB"/>
</dbReference>
<dbReference type="GO" id="GO:0005829">
    <property type="term" value="C:cytosol"/>
    <property type="evidence" value="ECO:0000314"/>
    <property type="project" value="HPA"/>
</dbReference>
<dbReference type="GO" id="GO:0070062">
    <property type="term" value="C:extracellular exosome"/>
    <property type="evidence" value="ECO:0007005"/>
    <property type="project" value="UniProtKB"/>
</dbReference>
<dbReference type="GO" id="GO:0005925">
    <property type="term" value="C:focal adhesion"/>
    <property type="evidence" value="ECO:0000314"/>
    <property type="project" value="UniProtKB"/>
</dbReference>
<dbReference type="GO" id="GO:0016020">
    <property type="term" value="C:membrane"/>
    <property type="evidence" value="ECO:0000314"/>
    <property type="project" value="UniProtKB"/>
</dbReference>
<dbReference type="GO" id="GO:0005634">
    <property type="term" value="C:nucleus"/>
    <property type="evidence" value="ECO:0000314"/>
    <property type="project" value="UniProtKB"/>
</dbReference>
<dbReference type="GO" id="GO:0005886">
    <property type="term" value="C:plasma membrane"/>
    <property type="evidence" value="ECO:0000314"/>
    <property type="project" value="HPA"/>
</dbReference>
<dbReference type="GO" id="GO:0050473">
    <property type="term" value="F:arachidonate 15-lipoxygenase activity"/>
    <property type="evidence" value="ECO:0000314"/>
    <property type="project" value="UniProtKB"/>
</dbReference>
<dbReference type="GO" id="GO:0036403">
    <property type="term" value="F:arachidonate 8(S)-lipoxygenase activity"/>
    <property type="evidence" value="ECO:0007669"/>
    <property type="project" value="Ensembl"/>
</dbReference>
<dbReference type="GO" id="GO:0005509">
    <property type="term" value="F:calcium ion binding"/>
    <property type="evidence" value="ECO:0000314"/>
    <property type="project" value="UniProtKB"/>
</dbReference>
<dbReference type="GO" id="GO:0005506">
    <property type="term" value="F:iron ion binding"/>
    <property type="evidence" value="ECO:0000314"/>
    <property type="project" value="UniProtKB"/>
</dbReference>
<dbReference type="GO" id="GO:0016165">
    <property type="term" value="F:linoleate 13S-lipoxygenase activity"/>
    <property type="evidence" value="ECO:0000314"/>
    <property type="project" value="UniProtKB"/>
</dbReference>
<dbReference type="GO" id="GO:1990136">
    <property type="term" value="F:linoleate 9S-lipoxygenase activity"/>
    <property type="evidence" value="ECO:0007669"/>
    <property type="project" value="Ensembl"/>
</dbReference>
<dbReference type="GO" id="GO:0008289">
    <property type="term" value="F:lipid binding"/>
    <property type="evidence" value="ECO:0007669"/>
    <property type="project" value="UniProtKB-KW"/>
</dbReference>
<dbReference type="GO" id="GO:0006915">
    <property type="term" value="P:apoptotic process"/>
    <property type="evidence" value="ECO:0000304"/>
    <property type="project" value="UniProtKB"/>
</dbReference>
<dbReference type="GO" id="GO:0019369">
    <property type="term" value="P:arachidonate metabolic process"/>
    <property type="evidence" value="ECO:0000314"/>
    <property type="project" value="UniProtKB"/>
</dbReference>
<dbReference type="GO" id="GO:1901696">
    <property type="term" value="P:cannabinoid biosynthetic process"/>
    <property type="evidence" value="ECO:0000314"/>
    <property type="project" value="UniProtKB"/>
</dbReference>
<dbReference type="GO" id="GO:0071926">
    <property type="term" value="P:endocannabinoid signaling pathway"/>
    <property type="evidence" value="ECO:0000314"/>
    <property type="project" value="UniProtKB"/>
</dbReference>
<dbReference type="GO" id="GO:0051122">
    <property type="term" value="P:hepoxilin biosynthetic process"/>
    <property type="evidence" value="ECO:0000250"/>
    <property type="project" value="UniProtKB"/>
</dbReference>
<dbReference type="GO" id="GO:0043651">
    <property type="term" value="P:linoleic acid metabolic process"/>
    <property type="evidence" value="ECO:0000318"/>
    <property type="project" value="GO_Central"/>
</dbReference>
<dbReference type="GO" id="GO:0006629">
    <property type="term" value="P:lipid metabolic process"/>
    <property type="evidence" value="ECO:0000314"/>
    <property type="project" value="UniProtKB"/>
</dbReference>
<dbReference type="GO" id="GO:0034440">
    <property type="term" value="P:lipid oxidation"/>
    <property type="evidence" value="ECO:0000318"/>
    <property type="project" value="GO_Central"/>
</dbReference>
<dbReference type="GO" id="GO:2001303">
    <property type="term" value="P:lipoxin A4 biosynthetic process"/>
    <property type="evidence" value="ECO:0000314"/>
    <property type="project" value="UniProtKB"/>
</dbReference>
<dbReference type="GO" id="GO:0019372">
    <property type="term" value="P:lipoxygenase pathway"/>
    <property type="evidence" value="ECO:0000318"/>
    <property type="project" value="GO_Central"/>
</dbReference>
<dbReference type="GO" id="GO:0045786">
    <property type="term" value="P:negative regulation of cell cycle"/>
    <property type="evidence" value="ECO:0000314"/>
    <property type="project" value="UniProtKB"/>
</dbReference>
<dbReference type="GO" id="GO:0030336">
    <property type="term" value="P:negative regulation of cell migration"/>
    <property type="evidence" value="ECO:0000304"/>
    <property type="project" value="UniProtKB"/>
</dbReference>
<dbReference type="GO" id="GO:0008285">
    <property type="term" value="P:negative regulation of cell population proliferation"/>
    <property type="evidence" value="ECO:0000314"/>
    <property type="project" value="UniProtKB"/>
</dbReference>
<dbReference type="GO" id="GO:0045926">
    <property type="term" value="P:negative regulation of growth"/>
    <property type="evidence" value="ECO:0000314"/>
    <property type="project" value="UniProtKB"/>
</dbReference>
<dbReference type="GO" id="GO:0006644">
    <property type="term" value="P:phospholipid metabolic process"/>
    <property type="evidence" value="ECO:0000314"/>
    <property type="project" value="UniProtKB"/>
</dbReference>
<dbReference type="GO" id="GO:0032722">
    <property type="term" value="P:positive regulation of chemokine production"/>
    <property type="evidence" value="ECO:0000315"/>
    <property type="project" value="UniProtKB"/>
</dbReference>
<dbReference type="GO" id="GO:0045618">
    <property type="term" value="P:positive regulation of keratinocyte differentiation"/>
    <property type="evidence" value="ECO:0007669"/>
    <property type="project" value="Ensembl"/>
</dbReference>
<dbReference type="GO" id="GO:0010744">
    <property type="term" value="P:positive regulation of macrophage derived foam cell differentiation"/>
    <property type="evidence" value="ECO:0000315"/>
    <property type="project" value="UniProtKB"/>
</dbReference>
<dbReference type="GO" id="GO:0035360">
    <property type="term" value="P:positive regulation of peroxisome proliferator activated receptor signaling pathway"/>
    <property type="evidence" value="ECO:0007669"/>
    <property type="project" value="Ensembl"/>
</dbReference>
<dbReference type="GO" id="GO:0030850">
    <property type="term" value="P:prostate gland development"/>
    <property type="evidence" value="ECO:0000303"/>
    <property type="project" value="UniProtKB"/>
</dbReference>
<dbReference type="GO" id="GO:0030856">
    <property type="term" value="P:regulation of epithelial cell differentiation"/>
    <property type="evidence" value="ECO:0000303"/>
    <property type="project" value="UniProtKB"/>
</dbReference>
<dbReference type="CDD" id="cd01753">
    <property type="entry name" value="PLAT_LOX"/>
    <property type="match status" value="1"/>
</dbReference>
<dbReference type="FunFam" id="3.10.450.60:FF:000001">
    <property type="entry name" value="arachidonate 12-lipoxygenase, 12R-type"/>
    <property type="match status" value="1"/>
</dbReference>
<dbReference type="FunFam" id="1.20.245.10:FF:000001">
    <property type="entry name" value="Arachidonate 5-lipoxygenase a"/>
    <property type="match status" value="1"/>
</dbReference>
<dbReference type="FunFam" id="2.60.60.20:FF:000002">
    <property type="entry name" value="Arachidonate 5-lipoxygenase a"/>
    <property type="match status" value="1"/>
</dbReference>
<dbReference type="Gene3D" id="3.10.450.60">
    <property type="match status" value="1"/>
</dbReference>
<dbReference type="Gene3D" id="1.20.245.10">
    <property type="entry name" value="Lipoxygenase-1, Domain 5"/>
    <property type="match status" value="1"/>
</dbReference>
<dbReference type="Gene3D" id="2.60.60.20">
    <property type="entry name" value="PLAT/LH2 domain"/>
    <property type="match status" value="1"/>
</dbReference>
<dbReference type="InterPro" id="IPR000907">
    <property type="entry name" value="LipOase"/>
</dbReference>
<dbReference type="InterPro" id="IPR013819">
    <property type="entry name" value="LipOase_C"/>
</dbReference>
<dbReference type="InterPro" id="IPR036226">
    <property type="entry name" value="LipOase_C_sf"/>
</dbReference>
<dbReference type="InterPro" id="IPR020834">
    <property type="entry name" value="LipOase_CS"/>
</dbReference>
<dbReference type="InterPro" id="IPR020833">
    <property type="entry name" value="LipOase_Fe_BS"/>
</dbReference>
<dbReference type="InterPro" id="IPR001885">
    <property type="entry name" value="LipOase_mml"/>
</dbReference>
<dbReference type="InterPro" id="IPR001024">
    <property type="entry name" value="PLAT/LH2_dom"/>
</dbReference>
<dbReference type="InterPro" id="IPR036392">
    <property type="entry name" value="PLAT/LH2_dom_sf"/>
</dbReference>
<dbReference type="InterPro" id="IPR042062">
    <property type="entry name" value="PLAT_LOX_verte"/>
</dbReference>
<dbReference type="PANTHER" id="PTHR11771">
    <property type="entry name" value="LIPOXYGENASE"/>
    <property type="match status" value="1"/>
</dbReference>
<dbReference type="Pfam" id="PF00305">
    <property type="entry name" value="Lipoxygenase"/>
    <property type="match status" value="1"/>
</dbReference>
<dbReference type="Pfam" id="PF01477">
    <property type="entry name" value="PLAT"/>
    <property type="match status" value="1"/>
</dbReference>
<dbReference type="PRINTS" id="PR00087">
    <property type="entry name" value="LIPOXYGENASE"/>
</dbReference>
<dbReference type="PRINTS" id="PR00467">
    <property type="entry name" value="MAMLPOXGNASE"/>
</dbReference>
<dbReference type="SMART" id="SM00308">
    <property type="entry name" value="LH2"/>
    <property type="match status" value="1"/>
</dbReference>
<dbReference type="SUPFAM" id="SSF49723">
    <property type="entry name" value="Lipase/lipooxygenase domain (PLAT/LH2 domain)"/>
    <property type="match status" value="1"/>
</dbReference>
<dbReference type="SUPFAM" id="SSF48484">
    <property type="entry name" value="Lipoxigenase"/>
    <property type="match status" value="1"/>
</dbReference>
<dbReference type="PROSITE" id="PS00711">
    <property type="entry name" value="LIPOXYGENASE_1"/>
    <property type="match status" value="1"/>
</dbReference>
<dbReference type="PROSITE" id="PS00081">
    <property type="entry name" value="LIPOXYGENASE_2"/>
    <property type="match status" value="1"/>
</dbReference>
<dbReference type="PROSITE" id="PS51393">
    <property type="entry name" value="LIPOXYGENASE_3"/>
    <property type="match status" value="1"/>
</dbReference>
<dbReference type="PROSITE" id="PS50095">
    <property type="entry name" value="PLAT"/>
    <property type="match status" value="1"/>
</dbReference>